<keyword id="KW-0002">3D-structure</keyword>
<keyword id="KW-0007">Acetylation</keyword>
<keyword id="KW-0963">Cytoplasm</keyword>
<keyword id="KW-0903">Direct protein sequencing</keyword>
<keyword id="KW-0597">Phosphoprotein</keyword>
<keyword id="KW-1185">Reference proteome</keyword>
<keyword id="KW-0677">Repeat</keyword>
<keyword id="KW-0687">Ribonucleoprotein</keyword>
<keyword id="KW-0689">Ribosomal protein</keyword>
<keyword id="KW-0694">RNA-binding</keyword>
<name>RL7_RAT</name>
<feature type="chain" id="PRO_0000104635" description="Large ribosomal subunit protein uL30">
    <location>
        <begin position="1"/>
        <end position="260"/>
    </location>
</feature>
<feature type="repeat" description="1">
    <location>
        <begin position="7"/>
        <end position="18"/>
    </location>
</feature>
<feature type="repeat" description="2">
    <location>
        <begin position="19"/>
        <end position="30"/>
    </location>
</feature>
<feature type="repeat" description="3">
    <location>
        <begin position="31"/>
        <end position="42"/>
    </location>
</feature>
<feature type="repeat" description="4">
    <location>
        <begin position="43"/>
        <end position="54"/>
    </location>
</feature>
<feature type="repeat" description="5">
    <location>
        <begin position="55"/>
        <end position="66"/>
    </location>
</feature>
<feature type="region of interest" description="5 X 12 AA tandem repeats">
    <location>
        <begin position="7"/>
        <end position="66"/>
    </location>
</feature>
<feature type="modified residue" description="N-acetylmethionine" evidence="3">
    <location>
        <position position="1"/>
    </location>
</feature>
<feature type="modified residue" description="Phosphothreonine" evidence="2">
    <location>
        <position position="29"/>
    </location>
</feature>
<feature type="modified residue" description="N6-acetyllysine" evidence="2">
    <location>
        <position position="136"/>
    </location>
</feature>
<feature type="modified residue" description="N6-succinyllysine" evidence="1">
    <location>
        <position position="139"/>
    </location>
</feature>
<feature type="modified residue" description="Phosphotyrosine" evidence="2">
    <location>
        <position position="151"/>
    </location>
</feature>
<comment type="function">
    <text evidence="2">Component of the large ribosomal subunit. The ribosome is a large ribonucleoprotein complex responsible for the synthesis of proteins in the cell. Binds to G-rich structures in 28S rRNA and in mRNAs. Plays a regulatory role in the translation apparatus; inhibits cell-free translation of mRNAs.</text>
</comment>
<comment type="subunit">
    <text evidence="2">Component of the large ribosomal subunit. Homodimer. Interacts with DHX33.</text>
</comment>
<comment type="subcellular location">
    <subcellularLocation>
        <location evidence="2">Cytoplasm</location>
    </subcellularLocation>
</comment>
<comment type="similarity">
    <text evidence="4">Belongs to the universal ribosomal protein uL30 family.</text>
</comment>
<sequence length="260" mass="30329">MEAVPEKKKKVAAALGTLKKKKVPAVPETLKKKRRNFAELKVKRLRKKFALKTLRKARRKLIYEKAKHYHKEYRQMYRTEIRMARMARKAGNFYVPAEPKLAFVIRIRGINGVSPKVRKVLQLLRLRQIFNGTFVKLNKASVNMLRIVEPYIAWGYPNLKSVNELIYKRGYGKINKKRIALTDNSLVARSLGKFGIICMEDLIHEIYTVGKRFKEANNFLWPFKLSSPRGGMKKKTTHFVEGGDAGNREDQINRLIRRMN</sequence>
<evidence type="ECO:0000250" key="1">
    <source>
        <dbReference type="UniProtKB" id="P14148"/>
    </source>
</evidence>
<evidence type="ECO:0000250" key="2">
    <source>
        <dbReference type="UniProtKB" id="P18124"/>
    </source>
</evidence>
<evidence type="ECO:0000269" key="3">
    <source ref="3"/>
</evidence>
<evidence type="ECO:0000305" key="4"/>
<reference key="1">
    <citation type="journal article" date="1987" name="J. Biol. Chem.">
        <title>The primary structure of rat ribosomal protein L7. The presence near the amino terminus of L7 of five tandem repeats of a sequence of 12 amino acids.</title>
        <authorList>
            <person name="Lin A."/>
            <person name="Chan Y.-L."/>
            <person name="McNally J."/>
            <person name="Peleg D."/>
            <person name="Meyuhas O."/>
            <person name="Wool I.G."/>
        </authorList>
    </citation>
    <scope>NUCLEOTIDE SEQUENCE [MRNA] OF 1-252</scope>
    <scope>PROTEIN SEQUENCE OF 253-258</scope>
</reference>
<reference key="2">
    <citation type="journal article" date="1995" name="Biochem. Biophys. Res. Commun.">
        <title>The primary structures of rat ribosomal proteins: the characterization of the cDNAs for S21 and L39, corrections in the sequences of L7 and L18a, and the identification of L33.</title>
        <authorList>
            <person name="Chan Y.-L."/>
            <person name="Olvera J."/>
            <person name="Wool I.G."/>
        </authorList>
    </citation>
    <scope>SEQUENCE REVISION TO 253-260</scope>
</reference>
<reference key="3">
    <citation type="submission" date="2006-08" db="UniProtKB">
        <authorList>
            <person name="Bienvenut W.V."/>
            <person name="von Kriegsheim A.F."/>
            <person name="Kolch W."/>
        </authorList>
    </citation>
    <scope>PROTEIN SEQUENCE OF 1-8 AND 161-168</scope>
    <scope>ACETYLATION AT MET-1</scope>
    <scope>IDENTIFICATION BY MASS SPECTROMETRY</scope>
    <source>
        <tissue>Pheochromocytoma</tissue>
    </source>
</reference>
<dbReference type="EMBL" id="M17422">
    <property type="protein sequence ID" value="AAA42075.1"/>
    <property type="molecule type" value="mRNA"/>
</dbReference>
<dbReference type="PIR" id="JC4230">
    <property type="entry name" value="R5RTL7"/>
</dbReference>
<dbReference type="PDB" id="7QGG">
    <property type="method" value="EM"/>
    <property type="resolution" value="2.86 A"/>
    <property type="chains" value="H=1-260"/>
</dbReference>
<dbReference type="PDBsum" id="7QGG"/>
<dbReference type="EMDB" id="EMD-13954"/>
<dbReference type="SMR" id="P05426"/>
<dbReference type="FunCoup" id="P05426">
    <property type="interactions" value="2182"/>
</dbReference>
<dbReference type="IntAct" id="P05426">
    <property type="interactions" value="3"/>
</dbReference>
<dbReference type="MINT" id="P05426"/>
<dbReference type="STRING" id="10116.ENSRNOP00000009431"/>
<dbReference type="iPTMnet" id="P05426"/>
<dbReference type="PhosphoSitePlus" id="P05426"/>
<dbReference type="jPOST" id="P05426"/>
<dbReference type="PaxDb" id="10116-ENSRNOP00000009431"/>
<dbReference type="UCSC" id="RGD:735169">
    <property type="organism name" value="rat"/>
</dbReference>
<dbReference type="AGR" id="RGD:735169"/>
<dbReference type="RGD" id="735169">
    <property type="gene designation" value="Rpl7"/>
</dbReference>
<dbReference type="eggNOG" id="KOG3184">
    <property type="taxonomic scope" value="Eukaryota"/>
</dbReference>
<dbReference type="InParanoid" id="P05426"/>
<dbReference type="PhylomeDB" id="P05426"/>
<dbReference type="Reactome" id="R-RNO-156827">
    <property type="pathway name" value="L13a-mediated translational silencing of Ceruloplasmin expression"/>
</dbReference>
<dbReference type="Reactome" id="R-RNO-1799339">
    <property type="pathway name" value="SRP-dependent cotranslational protein targeting to membrane"/>
</dbReference>
<dbReference type="Reactome" id="R-RNO-6791226">
    <property type="pathway name" value="Major pathway of rRNA processing in the nucleolus and cytosol"/>
</dbReference>
<dbReference type="Reactome" id="R-RNO-72689">
    <property type="pathway name" value="Formation of a pool of free 40S subunits"/>
</dbReference>
<dbReference type="Reactome" id="R-RNO-72706">
    <property type="pathway name" value="GTP hydrolysis and joining of the 60S ribosomal subunit"/>
</dbReference>
<dbReference type="Reactome" id="R-RNO-975956">
    <property type="pathway name" value="Nonsense Mediated Decay (NMD) independent of the Exon Junction Complex (EJC)"/>
</dbReference>
<dbReference type="Reactome" id="R-RNO-975957">
    <property type="pathway name" value="Nonsense Mediated Decay (NMD) enhanced by the Exon Junction Complex (EJC)"/>
</dbReference>
<dbReference type="PRO" id="PR:P05426"/>
<dbReference type="Proteomes" id="UP000002494">
    <property type="component" value="Unplaced"/>
</dbReference>
<dbReference type="GO" id="GO:0031672">
    <property type="term" value="C:A band"/>
    <property type="evidence" value="ECO:0000314"/>
    <property type="project" value="RGD"/>
</dbReference>
<dbReference type="GO" id="GO:0005737">
    <property type="term" value="C:cytoplasm"/>
    <property type="evidence" value="ECO:0000266"/>
    <property type="project" value="RGD"/>
</dbReference>
<dbReference type="GO" id="GO:0022625">
    <property type="term" value="C:cytosolic large ribosomal subunit"/>
    <property type="evidence" value="ECO:0000314"/>
    <property type="project" value="RGD"/>
</dbReference>
<dbReference type="GO" id="GO:0022626">
    <property type="term" value="C:cytosolic ribosome"/>
    <property type="evidence" value="ECO:0000266"/>
    <property type="project" value="RGD"/>
</dbReference>
<dbReference type="GO" id="GO:0014069">
    <property type="term" value="C:postsynaptic density"/>
    <property type="evidence" value="ECO:0000266"/>
    <property type="project" value="RGD"/>
</dbReference>
<dbReference type="GO" id="GO:1990904">
    <property type="term" value="C:ribonucleoprotein complex"/>
    <property type="evidence" value="ECO:0000266"/>
    <property type="project" value="RGD"/>
</dbReference>
<dbReference type="GO" id="GO:0005840">
    <property type="term" value="C:ribosome"/>
    <property type="evidence" value="ECO:0000314"/>
    <property type="project" value="RGD"/>
</dbReference>
<dbReference type="GO" id="GO:0045202">
    <property type="term" value="C:synapse"/>
    <property type="evidence" value="ECO:0000266"/>
    <property type="project" value="RGD"/>
</dbReference>
<dbReference type="GO" id="GO:0008097">
    <property type="term" value="F:5S rRNA binding"/>
    <property type="evidence" value="ECO:0000314"/>
    <property type="project" value="RGD"/>
</dbReference>
<dbReference type="GO" id="GO:0003677">
    <property type="term" value="F:DNA binding"/>
    <property type="evidence" value="ECO:0000266"/>
    <property type="project" value="RGD"/>
</dbReference>
<dbReference type="GO" id="GO:0042802">
    <property type="term" value="F:identical protein binding"/>
    <property type="evidence" value="ECO:0000266"/>
    <property type="project" value="RGD"/>
</dbReference>
<dbReference type="GO" id="GO:0003729">
    <property type="term" value="F:mRNA binding"/>
    <property type="evidence" value="ECO:0000266"/>
    <property type="project" value="RGD"/>
</dbReference>
<dbReference type="GO" id="GO:0003723">
    <property type="term" value="F:RNA binding"/>
    <property type="evidence" value="ECO:0000318"/>
    <property type="project" value="GO_Central"/>
</dbReference>
<dbReference type="GO" id="GO:0003735">
    <property type="term" value="F:structural constituent of ribosome"/>
    <property type="evidence" value="ECO:0000266"/>
    <property type="project" value="RGD"/>
</dbReference>
<dbReference type="GO" id="GO:0097421">
    <property type="term" value="P:liver regeneration"/>
    <property type="evidence" value="ECO:0000270"/>
    <property type="project" value="RGD"/>
</dbReference>
<dbReference type="GO" id="GO:0000463">
    <property type="term" value="P:maturation of LSU-rRNA from tricistronic rRNA transcript (SSU-rRNA, 5.8S rRNA, LSU-rRNA)"/>
    <property type="evidence" value="ECO:0000318"/>
    <property type="project" value="GO_Central"/>
</dbReference>
<dbReference type="GO" id="GO:0042273">
    <property type="term" value="P:ribosomal large subunit biogenesis"/>
    <property type="evidence" value="ECO:0000266"/>
    <property type="project" value="RGD"/>
</dbReference>
<dbReference type="GO" id="GO:0006364">
    <property type="term" value="P:rRNA processing"/>
    <property type="evidence" value="ECO:0000266"/>
    <property type="project" value="RGD"/>
</dbReference>
<dbReference type="CDD" id="cd01657">
    <property type="entry name" value="Ribosomal_L7_archeal_euk"/>
    <property type="match status" value="1"/>
</dbReference>
<dbReference type="FunFam" id="3.30.1390.20:FF:000002">
    <property type="entry name" value="60S ribosomal protein L7"/>
    <property type="match status" value="1"/>
</dbReference>
<dbReference type="FunFam" id="3.30.1390.20:FF:000003">
    <property type="entry name" value="60S ribosomal protein L7"/>
    <property type="match status" value="1"/>
</dbReference>
<dbReference type="Gene3D" id="3.30.1390.20">
    <property type="entry name" value="Ribosomal protein L30, ferredoxin-like fold domain"/>
    <property type="match status" value="2"/>
</dbReference>
<dbReference type="InterPro" id="IPR036919">
    <property type="entry name" value="Ribo_uL30_ferredoxin-like_sf"/>
</dbReference>
<dbReference type="InterPro" id="IPR039699">
    <property type="entry name" value="Ribosomal_uL30"/>
</dbReference>
<dbReference type="InterPro" id="IPR018038">
    <property type="entry name" value="Ribosomal_uL30_CS"/>
</dbReference>
<dbReference type="InterPro" id="IPR005998">
    <property type="entry name" value="Ribosomal_uL30_euk"/>
</dbReference>
<dbReference type="InterPro" id="IPR035808">
    <property type="entry name" value="Ribosomal_uL30_euk_arc"/>
</dbReference>
<dbReference type="InterPro" id="IPR016082">
    <property type="entry name" value="Ribosomal_uL30_ferredoxin-like"/>
</dbReference>
<dbReference type="InterPro" id="IPR012988">
    <property type="entry name" value="Ribosomal_uL30_N_euk"/>
</dbReference>
<dbReference type="NCBIfam" id="TIGR01310">
    <property type="entry name" value="uL30_euk"/>
    <property type="match status" value="1"/>
</dbReference>
<dbReference type="PANTHER" id="PTHR11524">
    <property type="entry name" value="60S RIBOSOMAL PROTEIN L7"/>
    <property type="match status" value="1"/>
</dbReference>
<dbReference type="PANTHER" id="PTHR11524:SF12">
    <property type="entry name" value="LARGE RIBOSOMAL SUBUNIT PROTEIN UL30"/>
    <property type="match status" value="1"/>
</dbReference>
<dbReference type="Pfam" id="PF00327">
    <property type="entry name" value="Ribosomal_L30"/>
    <property type="match status" value="1"/>
</dbReference>
<dbReference type="Pfam" id="PF08079">
    <property type="entry name" value="Ribosomal_L30_N"/>
    <property type="match status" value="1"/>
</dbReference>
<dbReference type="SUPFAM" id="SSF55129">
    <property type="entry name" value="Ribosomal protein L30p/L7e"/>
    <property type="match status" value="1"/>
</dbReference>
<dbReference type="PROSITE" id="PS00634">
    <property type="entry name" value="RIBOSOMAL_L30"/>
    <property type="match status" value="1"/>
</dbReference>
<organism>
    <name type="scientific">Rattus norvegicus</name>
    <name type="common">Rat</name>
    <dbReference type="NCBI Taxonomy" id="10116"/>
    <lineage>
        <taxon>Eukaryota</taxon>
        <taxon>Metazoa</taxon>
        <taxon>Chordata</taxon>
        <taxon>Craniata</taxon>
        <taxon>Vertebrata</taxon>
        <taxon>Euteleostomi</taxon>
        <taxon>Mammalia</taxon>
        <taxon>Eutheria</taxon>
        <taxon>Euarchontoglires</taxon>
        <taxon>Glires</taxon>
        <taxon>Rodentia</taxon>
        <taxon>Myomorpha</taxon>
        <taxon>Muroidea</taxon>
        <taxon>Muridae</taxon>
        <taxon>Murinae</taxon>
        <taxon>Rattus</taxon>
    </lineage>
</organism>
<accession>P05426</accession>
<gene>
    <name type="primary">Rpl7</name>
</gene>
<protein>
    <recommendedName>
        <fullName evidence="4">Large ribosomal subunit protein uL30</fullName>
    </recommendedName>
    <alternativeName>
        <fullName>60S ribosomal protein L7</fullName>
    </alternativeName>
</protein>
<proteinExistence type="evidence at protein level"/>